<feature type="chain" id="PRO_0000077442" description="Carbonic anhydrase">
    <location>
        <begin position="1"/>
        <end position="260"/>
    </location>
</feature>
<feature type="domain" description="Alpha-carbonic anhydrase" evidence="2">
    <location>
        <begin position="3"/>
        <end position="259"/>
    </location>
</feature>
<feature type="region of interest" description="Disordered" evidence="3">
    <location>
        <begin position="1"/>
        <end position="31"/>
    </location>
</feature>
<feature type="active site" description="Proton acceptor" evidence="2">
    <location>
        <position position="64"/>
    </location>
</feature>
<feature type="active site" evidence="1">
    <location>
        <position position="127"/>
    </location>
</feature>
<feature type="binding site" evidence="2">
    <location>
        <position position="94"/>
    </location>
    <ligand>
        <name>Zn(2+)</name>
        <dbReference type="ChEBI" id="CHEBI:29105"/>
        <note>catalytic</note>
    </ligand>
</feature>
<feature type="binding site" evidence="2">
    <location>
        <position position="96"/>
    </location>
    <ligand>
        <name>Zn(2+)</name>
        <dbReference type="ChEBI" id="CHEBI:29105"/>
        <note>catalytic</note>
    </ligand>
</feature>
<feature type="binding site" evidence="2">
    <location>
        <position position="119"/>
    </location>
    <ligand>
        <name>Zn(2+)</name>
        <dbReference type="ChEBI" id="CHEBI:29105"/>
        <note>catalytic</note>
    </ligand>
</feature>
<feature type="binding site" evidence="1">
    <location>
        <begin position="198"/>
        <end position="199"/>
    </location>
    <ligand>
        <name>substrate</name>
    </ligand>
</feature>
<proteinExistence type="evidence at protein level"/>
<gene>
    <name type="primary">cahz</name>
    <name type="synonym">cah-z</name>
</gene>
<sequence>MAHAWGYGPADGPESWAESFPIANGPRQSPIDIVPTQAQHDPSLKHLKLKYDPATTKSILNNGHSFQVDFVDDDNSSTLAGGPITGIYRLRQFHFHWGSSDDKGSEHTIAGTKFPCELHLVHWNTKYPNFGEAASKPDGLAVVGVFLKIGAANPRLQKVLDALDDIKSKGRQTTFANFDPKTLLPASLDYWTYEGSLTTPPLLESVTWIVLKEPISVSPAQMAKFRSLLFSSEGETPCCMVDNYRPPQPLKGRKVRASFK</sequence>
<protein>
    <recommendedName>
        <fullName>Carbonic anhydrase</fullName>
        <ecNumber>4.2.1.1</ecNumber>
    </recommendedName>
    <alternativeName>
        <fullName>Carbonate dehydratase</fullName>
    </alternativeName>
</protein>
<accession>Q92051</accession>
<evidence type="ECO:0000250" key="1"/>
<evidence type="ECO:0000255" key="2">
    <source>
        <dbReference type="PROSITE-ProRule" id="PRU01134"/>
    </source>
</evidence>
<evidence type="ECO:0000256" key="3">
    <source>
        <dbReference type="SAM" id="MobiDB-lite"/>
    </source>
</evidence>
<evidence type="ECO:0000305" key="4"/>
<dbReference type="EC" id="4.2.1.1"/>
<dbReference type="EMBL" id="U55177">
    <property type="protein sequence ID" value="AAB82303.1"/>
    <property type="molecule type" value="mRNA"/>
</dbReference>
<dbReference type="EMBL" id="BC065611">
    <property type="protein sequence ID" value="AAH65611.1"/>
    <property type="molecule type" value="mRNA"/>
</dbReference>
<dbReference type="PIR" id="T08463">
    <property type="entry name" value="T08463"/>
</dbReference>
<dbReference type="RefSeq" id="NP_571185.1">
    <property type="nucleotide sequence ID" value="NM_131110.1"/>
</dbReference>
<dbReference type="SMR" id="Q92051"/>
<dbReference type="FunCoup" id="Q92051">
    <property type="interactions" value="1182"/>
</dbReference>
<dbReference type="STRING" id="7955.ENSDARP00000022592"/>
<dbReference type="PaxDb" id="7955-ENSDARP00000022592"/>
<dbReference type="Ensembl" id="ENSDART00000013411">
    <property type="protein sequence ID" value="ENSDARP00000022592"/>
    <property type="gene ID" value="ENSDARG00000011166"/>
</dbReference>
<dbReference type="GeneID" id="30331"/>
<dbReference type="KEGG" id="dre:30331"/>
<dbReference type="AGR" id="ZFIN:ZDB-GENE-980526-39"/>
<dbReference type="CTD" id="30331"/>
<dbReference type="ZFIN" id="ZDB-GENE-980526-39">
    <property type="gene designation" value="cahz"/>
</dbReference>
<dbReference type="eggNOG" id="KOG0382">
    <property type="taxonomic scope" value="Eukaryota"/>
</dbReference>
<dbReference type="HOGENOM" id="CLU_039326_2_1_1"/>
<dbReference type="InParanoid" id="Q92051"/>
<dbReference type="OMA" id="VPREAQY"/>
<dbReference type="OrthoDB" id="429145at2759"/>
<dbReference type="PhylomeDB" id="Q92051"/>
<dbReference type="TreeFam" id="TF316425"/>
<dbReference type="Reactome" id="R-DRE-1237044">
    <property type="pathway name" value="Erythrocytes take up carbon dioxide and release oxygen"/>
</dbReference>
<dbReference type="Reactome" id="R-DRE-1247673">
    <property type="pathway name" value="Erythrocytes take up oxygen and release carbon dioxide"/>
</dbReference>
<dbReference type="Reactome" id="R-DRE-1475029">
    <property type="pathway name" value="Reversible hydration of carbon dioxide"/>
</dbReference>
<dbReference type="PRO" id="PR:Q92051"/>
<dbReference type="Proteomes" id="UP000000437">
    <property type="component" value="Chromosome 2"/>
</dbReference>
<dbReference type="Bgee" id="ENSDARG00000011166">
    <property type="expression patterns" value="Expressed in spleen and 37 other cell types or tissues"/>
</dbReference>
<dbReference type="GO" id="GO:0005737">
    <property type="term" value="C:cytoplasm"/>
    <property type="evidence" value="ECO:0000318"/>
    <property type="project" value="GO_Central"/>
</dbReference>
<dbReference type="GO" id="GO:0004089">
    <property type="term" value="F:carbonate dehydratase activity"/>
    <property type="evidence" value="ECO:0000315"/>
    <property type="project" value="ZFIN"/>
</dbReference>
<dbReference type="GO" id="GO:0008270">
    <property type="term" value="F:zinc ion binding"/>
    <property type="evidence" value="ECO:0007669"/>
    <property type="project" value="InterPro"/>
</dbReference>
<dbReference type="GO" id="GO:0015670">
    <property type="term" value="P:carbon dioxide transport"/>
    <property type="evidence" value="ECO:0000315"/>
    <property type="project" value="ZFIN"/>
</dbReference>
<dbReference type="GO" id="GO:0042539">
    <property type="term" value="P:hypotonic salinity response"/>
    <property type="evidence" value="ECO:0000314"/>
    <property type="project" value="ZFIN"/>
</dbReference>
<dbReference type="GO" id="GO:0006885">
    <property type="term" value="P:regulation of pH"/>
    <property type="evidence" value="ECO:0000318"/>
    <property type="project" value="GO_Central"/>
</dbReference>
<dbReference type="CDD" id="cd03119">
    <property type="entry name" value="alpha_CA_I_II_III_XIII"/>
    <property type="match status" value="1"/>
</dbReference>
<dbReference type="FunFam" id="3.10.200.10:FF:000001">
    <property type="entry name" value="Carbonic anhydrase 2"/>
    <property type="match status" value="1"/>
</dbReference>
<dbReference type="Gene3D" id="3.10.200.10">
    <property type="entry name" value="Alpha carbonic anhydrase"/>
    <property type="match status" value="1"/>
</dbReference>
<dbReference type="InterPro" id="IPR001148">
    <property type="entry name" value="CA_dom"/>
</dbReference>
<dbReference type="InterPro" id="IPR036398">
    <property type="entry name" value="CA_dom_sf"/>
</dbReference>
<dbReference type="InterPro" id="IPR023561">
    <property type="entry name" value="Carbonic_anhydrase_a-class"/>
</dbReference>
<dbReference type="InterPro" id="IPR018338">
    <property type="entry name" value="Carbonic_anhydrase_a-class_CS"/>
</dbReference>
<dbReference type="PANTHER" id="PTHR18952">
    <property type="entry name" value="CARBONIC ANHYDRASE"/>
    <property type="match status" value="1"/>
</dbReference>
<dbReference type="PANTHER" id="PTHR18952:SF120">
    <property type="entry name" value="CARBONIC ANHYDRASE 2"/>
    <property type="match status" value="1"/>
</dbReference>
<dbReference type="Pfam" id="PF00194">
    <property type="entry name" value="Carb_anhydrase"/>
    <property type="match status" value="1"/>
</dbReference>
<dbReference type="SMART" id="SM01057">
    <property type="entry name" value="Carb_anhydrase"/>
    <property type="match status" value="1"/>
</dbReference>
<dbReference type="SUPFAM" id="SSF51069">
    <property type="entry name" value="Carbonic anhydrase"/>
    <property type="match status" value="1"/>
</dbReference>
<dbReference type="PROSITE" id="PS00162">
    <property type="entry name" value="ALPHA_CA_1"/>
    <property type="match status" value="1"/>
</dbReference>
<dbReference type="PROSITE" id="PS51144">
    <property type="entry name" value="ALPHA_CA_2"/>
    <property type="match status" value="1"/>
</dbReference>
<reference key="1">
    <citation type="journal article" date="1997" name="J. Mol. Evol.">
        <title>Isolation and characterization of a carbonic anhydrase homologue from the zebrafish (Danio rerio).</title>
        <authorList>
            <person name="Peterson R.E."/>
            <person name="Tu C."/>
            <person name="Linser P.J."/>
        </authorList>
    </citation>
    <scope>NUCLEOTIDE SEQUENCE [MRNA]</scope>
    <scope>PARTIAL PROTEIN SEQUENCE</scope>
</reference>
<reference key="2">
    <citation type="submission" date="2004-01" db="EMBL/GenBank/DDBJ databases">
        <authorList>
            <consortium name="NIH - Zebrafish Gene Collection (ZGC) project"/>
        </authorList>
    </citation>
    <scope>NUCLEOTIDE SEQUENCE [LARGE SCALE MRNA]</scope>
    <source>
        <tissue>Kidney</tissue>
    </source>
</reference>
<name>CAHZ_DANRE</name>
<keyword id="KW-0903">Direct protein sequencing</keyword>
<keyword id="KW-0456">Lyase</keyword>
<keyword id="KW-0479">Metal-binding</keyword>
<keyword id="KW-1185">Reference proteome</keyword>
<keyword id="KW-0862">Zinc</keyword>
<organism>
    <name type="scientific">Danio rerio</name>
    <name type="common">Zebrafish</name>
    <name type="synonym">Brachydanio rerio</name>
    <dbReference type="NCBI Taxonomy" id="7955"/>
    <lineage>
        <taxon>Eukaryota</taxon>
        <taxon>Metazoa</taxon>
        <taxon>Chordata</taxon>
        <taxon>Craniata</taxon>
        <taxon>Vertebrata</taxon>
        <taxon>Euteleostomi</taxon>
        <taxon>Actinopterygii</taxon>
        <taxon>Neopterygii</taxon>
        <taxon>Teleostei</taxon>
        <taxon>Ostariophysi</taxon>
        <taxon>Cypriniformes</taxon>
        <taxon>Danionidae</taxon>
        <taxon>Danioninae</taxon>
        <taxon>Danio</taxon>
    </lineage>
</organism>
<comment type="function">
    <text>Reversible hydration of carbon dioxide.</text>
</comment>
<comment type="catalytic activity">
    <reaction>
        <text>hydrogencarbonate + H(+) = CO2 + H2O</text>
        <dbReference type="Rhea" id="RHEA:10748"/>
        <dbReference type="ChEBI" id="CHEBI:15377"/>
        <dbReference type="ChEBI" id="CHEBI:15378"/>
        <dbReference type="ChEBI" id="CHEBI:16526"/>
        <dbReference type="ChEBI" id="CHEBI:17544"/>
        <dbReference type="EC" id="4.2.1.1"/>
    </reaction>
</comment>
<comment type="cofactor">
    <cofactor evidence="1">
        <name>Zn(2+)</name>
        <dbReference type="ChEBI" id="CHEBI:29105"/>
    </cofactor>
</comment>
<comment type="similarity">
    <text evidence="4">Belongs to the alpha-carbonic anhydrase family.</text>
</comment>